<feature type="chain" id="PRO_0000104324" description="Large ribosomal subunit protein uL11">
    <location>
        <begin position="1"/>
        <end position="197"/>
    </location>
</feature>
<comment type="function">
    <text evidence="1">Forms part of the ribosomal stalk which helps the ribosome interact with GTP-bound translation factors.</text>
</comment>
<comment type="subunit">
    <text evidence="1">Part of the ribosomal stalk of the 50S ribosomal subunit. Interacts with L10 and the large rRNA to form the base of the stalk. L10 forms an elongated spine to which L12 dimers bind in a sequential fashion forming a multimeric L10(L12)X complex.</text>
</comment>
<comment type="PTM">
    <text evidence="1">One or more lysine residues are methylated.</text>
</comment>
<comment type="similarity">
    <text evidence="1">Belongs to the universal ribosomal protein uL11 family.</text>
</comment>
<comment type="sequence caution" evidence="2">
    <conflict type="erroneous initiation">
        <sequence resource="EMBL-CDS" id="CAC13182"/>
    </conflict>
</comment>
<name>RL11_MYCPU</name>
<sequence length="197" mass="21525">MAKKEVVKIAKLQFIAGQAKPGPSLAGVGINMPEFTRQFNEQTRDRGNEPVPVEITAYKDKSFDFRLFTAPASFKILQAIKAKSGSANSKTNIIGTLTLAQLEEIAKYKLPDLNTDDYKVAMHTIAGTAKNMGVLVEGWDDVKKAKEEAKAAKLAQLKAEAKEAALKEAEKELVDSKGKEVEVKLVGEEEQSESENN</sequence>
<gene>
    <name evidence="1" type="primary">rplK</name>
    <name type="ordered locus">MYPU_0090</name>
</gene>
<accession>Q98RJ9</accession>
<organism>
    <name type="scientific">Mycoplasmopsis pulmonis (strain UAB CTIP)</name>
    <name type="common">Mycoplasma pulmonis</name>
    <dbReference type="NCBI Taxonomy" id="272635"/>
    <lineage>
        <taxon>Bacteria</taxon>
        <taxon>Bacillati</taxon>
        <taxon>Mycoplasmatota</taxon>
        <taxon>Mycoplasmoidales</taxon>
        <taxon>Metamycoplasmataceae</taxon>
        <taxon>Mycoplasmopsis</taxon>
    </lineage>
</organism>
<keyword id="KW-0488">Methylation</keyword>
<keyword id="KW-1185">Reference proteome</keyword>
<keyword id="KW-0687">Ribonucleoprotein</keyword>
<keyword id="KW-0689">Ribosomal protein</keyword>
<keyword id="KW-0694">RNA-binding</keyword>
<keyword id="KW-0699">rRNA-binding</keyword>
<protein>
    <recommendedName>
        <fullName evidence="1">Large ribosomal subunit protein uL11</fullName>
    </recommendedName>
    <alternativeName>
        <fullName evidence="2">50S ribosomal protein L11</fullName>
    </alternativeName>
</protein>
<evidence type="ECO:0000255" key="1">
    <source>
        <dbReference type="HAMAP-Rule" id="MF_00736"/>
    </source>
</evidence>
<evidence type="ECO:0000305" key="2"/>
<dbReference type="EMBL" id="AL445563">
    <property type="protein sequence ID" value="CAC13182.1"/>
    <property type="status" value="ALT_INIT"/>
    <property type="molecule type" value="Genomic_DNA"/>
</dbReference>
<dbReference type="PIR" id="A90513">
    <property type="entry name" value="A90513"/>
</dbReference>
<dbReference type="RefSeq" id="WP_010924813.1">
    <property type="nucleotide sequence ID" value="NC_002771.1"/>
</dbReference>
<dbReference type="SMR" id="Q98RJ9"/>
<dbReference type="STRING" id="272635.gene:17576588"/>
<dbReference type="KEGG" id="mpu:MYPU_0090"/>
<dbReference type="eggNOG" id="COG0080">
    <property type="taxonomic scope" value="Bacteria"/>
</dbReference>
<dbReference type="HOGENOM" id="CLU_074237_2_2_14"/>
<dbReference type="BioCyc" id="MPUL272635:G1GT6-9-MONOMER"/>
<dbReference type="Proteomes" id="UP000000528">
    <property type="component" value="Chromosome"/>
</dbReference>
<dbReference type="GO" id="GO:0022625">
    <property type="term" value="C:cytosolic large ribosomal subunit"/>
    <property type="evidence" value="ECO:0007669"/>
    <property type="project" value="TreeGrafter"/>
</dbReference>
<dbReference type="GO" id="GO:0070180">
    <property type="term" value="F:large ribosomal subunit rRNA binding"/>
    <property type="evidence" value="ECO:0007669"/>
    <property type="project" value="UniProtKB-UniRule"/>
</dbReference>
<dbReference type="GO" id="GO:0003735">
    <property type="term" value="F:structural constituent of ribosome"/>
    <property type="evidence" value="ECO:0007669"/>
    <property type="project" value="InterPro"/>
</dbReference>
<dbReference type="GO" id="GO:0006412">
    <property type="term" value="P:translation"/>
    <property type="evidence" value="ECO:0007669"/>
    <property type="project" value="UniProtKB-UniRule"/>
</dbReference>
<dbReference type="CDD" id="cd00349">
    <property type="entry name" value="Ribosomal_L11"/>
    <property type="match status" value="1"/>
</dbReference>
<dbReference type="Gene3D" id="1.10.10.250">
    <property type="entry name" value="Ribosomal protein L11, C-terminal domain"/>
    <property type="match status" value="1"/>
</dbReference>
<dbReference type="Gene3D" id="3.30.1550.10">
    <property type="entry name" value="Ribosomal protein L11/L12, N-terminal domain"/>
    <property type="match status" value="1"/>
</dbReference>
<dbReference type="HAMAP" id="MF_00736">
    <property type="entry name" value="Ribosomal_uL11"/>
    <property type="match status" value="1"/>
</dbReference>
<dbReference type="InterPro" id="IPR000911">
    <property type="entry name" value="Ribosomal_uL11"/>
</dbReference>
<dbReference type="InterPro" id="IPR006519">
    <property type="entry name" value="Ribosomal_uL11_bac-typ"/>
</dbReference>
<dbReference type="InterPro" id="IPR020783">
    <property type="entry name" value="Ribosomal_uL11_C"/>
</dbReference>
<dbReference type="InterPro" id="IPR036769">
    <property type="entry name" value="Ribosomal_uL11_C_sf"/>
</dbReference>
<dbReference type="InterPro" id="IPR020784">
    <property type="entry name" value="Ribosomal_uL11_N"/>
</dbReference>
<dbReference type="InterPro" id="IPR036796">
    <property type="entry name" value="Ribosomal_uL11_N_sf"/>
</dbReference>
<dbReference type="NCBIfam" id="TIGR01632">
    <property type="entry name" value="L11_bact"/>
    <property type="match status" value="1"/>
</dbReference>
<dbReference type="NCBIfam" id="NF011111">
    <property type="entry name" value="PRK14539.1"/>
    <property type="match status" value="1"/>
</dbReference>
<dbReference type="PANTHER" id="PTHR11661">
    <property type="entry name" value="60S RIBOSOMAL PROTEIN L12"/>
    <property type="match status" value="1"/>
</dbReference>
<dbReference type="PANTHER" id="PTHR11661:SF1">
    <property type="entry name" value="LARGE RIBOSOMAL SUBUNIT PROTEIN UL11M"/>
    <property type="match status" value="1"/>
</dbReference>
<dbReference type="Pfam" id="PF00298">
    <property type="entry name" value="Ribosomal_L11"/>
    <property type="match status" value="1"/>
</dbReference>
<dbReference type="Pfam" id="PF03946">
    <property type="entry name" value="Ribosomal_L11_N"/>
    <property type="match status" value="1"/>
</dbReference>
<dbReference type="SMART" id="SM00649">
    <property type="entry name" value="RL11"/>
    <property type="match status" value="1"/>
</dbReference>
<dbReference type="SUPFAM" id="SSF54747">
    <property type="entry name" value="Ribosomal L11/L12e N-terminal domain"/>
    <property type="match status" value="1"/>
</dbReference>
<dbReference type="SUPFAM" id="SSF46906">
    <property type="entry name" value="Ribosomal protein L11, C-terminal domain"/>
    <property type="match status" value="1"/>
</dbReference>
<reference key="1">
    <citation type="journal article" date="2001" name="Nucleic Acids Res.">
        <title>The complete genome sequence of the murine respiratory pathogen Mycoplasma pulmonis.</title>
        <authorList>
            <person name="Chambaud I."/>
            <person name="Heilig R."/>
            <person name="Ferris S."/>
            <person name="Barbe V."/>
            <person name="Samson D."/>
            <person name="Galisson F."/>
            <person name="Moszer I."/>
            <person name="Dybvig K."/>
            <person name="Wroblewski H."/>
            <person name="Viari A."/>
            <person name="Rocha E.P.C."/>
            <person name="Blanchard A."/>
        </authorList>
    </citation>
    <scope>NUCLEOTIDE SEQUENCE [LARGE SCALE GENOMIC DNA]</scope>
    <source>
        <strain>UAB CTIP</strain>
    </source>
</reference>
<proteinExistence type="inferred from homology"/>